<name>Y2284_STAAW</name>
<organism>
    <name type="scientific">Staphylococcus aureus (strain MW2)</name>
    <dbReference type="NCBI Taxonomy" id="196620"/>
    <lineage>
        <taxon>Bacteria</taxon>
        <taxon>Bacillati</taxon>
        <taxon>Bacillota</taxon>
        <taxon>Bacilli</taxon>
        <taxon>Bacillales</taxon>
        <taxon>Staphylococcaceae</taxon>
        <taxon>Staphylococcus</taxon>
    </lineage>
</organism>
<sequence length="147" mass="17353">MMKLNLFINAKETESYIDIHAPKMNDHVQSIINAVNDLDKSHTLVGYIDKEIHIINVSDVITFQVINKNVTAITSNQKFKLKLRLYELEKQLPQHFIRISKSEIVNKYYIEKLLLEPNGLIRMYLKDAHYTYSSRRYLKSIKERLSI</sequence>
<protein>
    <recommendedName>
        <fullName>Uncharacterized HTH-type transcriptional regulator MW2284</fullName>
    </recommendedName>
</protein>
<evidence type="ECO:0000255" key="1">
    <source>
        <dbReference type="PROSITE-ProRule" id="PRU00112"/>
    </source>
</evidence>
<evidence type="ECO:0000305" key="2"/>
<gene>
    <name type="ordered locus">MW2284</name>
</gene>
<keyword id="KW-0963">Cytoplasm</keyword>
<keyword id="KW-0238">DNA-binding</keyword>
<keyword id="KW-0804">Transcription</keyword>
<keyword id="KW-0805">Transcription regulation</keyword>
<feature type="chain" id="PRO_0000298605" description="Uncharacterized HTH-type transcriptional regulator MW2284">
    <location>
        <begin position="1"/>
        <end position="147"/>
    </location>
</feature>
<feature type="domain" description="HTH LytTR-type" evidence="1">
    <location>
        <begin position="44"/>
        <end position="147"/>
    </location>
</feature>
<accession>Q8NV45</accession>
<proteinExistence type="predicted"/>
<comment type="subcellular location">
    <subcellularLocation>
        <location evidence="2">Cytoplasm</location>
    </subcellularLocation>
</comment>
<reference key="1">
    <citation type="journal article" date="2002" name="Lancet">
        <title>Genome and virulence determinants of high virulence community-acquired MRSA.</title>
        <authorList>
            <person name="Baba T."/>
            <person name="Takeuchi F."/>
            <person name="Kuroda M."/>
            <person name="Yuzawa H."/>
            <person name="Aoki K."/>
            <person name="Oguchi A."/>
            <person name="Nagai Y."/>
            <person name="Iwama N."/>
            <person name="Asano K."/>
            <person name="Naimi T."/>
            <person name="Kuroda H."/>
            <person name="Cui L."/>
            <person name="Yamamoto K."/>
            <person name="Hiramatsu K."/>
        </authorList>
    </citation>
    <scope>NUCLEOTIDE SEQUENCE [LARGE SCALE GENOMIC DNA]</scope>
    <source>
        <strain>MW2</strain>
    </source>
</reference>
<dbReference type="EMBL" id="BA000033">
    <property type="protein sequence ID" value="BAB96149.1"/>
    <property type="molecule type" value="Genomic_DNA"/>
</dbReference>
<dbReference type="RefSeq" id="WP_000977022.1">
    <property type="nucleotide sequence ID" value="NC_003923.1"/>
</dbReference>
<dbReference type="SMR" id="Q8NV45"/>
<dbReference type="KEGG" id="sam:MW2284"/>
<dbReference type="HOGENOM" id="CLU_106729_4_0_9"/>
<dbReference type="GO" id="GO:0005737">
    <property type="term" value="C:cytoplasm"/>
    <property type="evidence" value="ECO:0007669"/>
    <property type="project" value="UniProtKB-SubCell"/>
</dbReference>
<dbReference type="GO" id="GO:0003677">
    <property type="term" value="F:DNA binding"/>
    <property type="evidence" value="ECO:0007669"/>
    <property type="project" value="UniProtKB-KW"/>
</dbReference>
<dbReference type="GO" id="GO:0000156">
    <property type="term" value="F:phosphorelay response regulator activity"/>
    <property type="evidence" value="ECO:0007669"/>
    <property type="project" value="InterPro"/>
</dbReference>
<dbReference type="Gene3D" id="2.40.50.1020">
    <property type="entry name" value="LytTr DNA-binding domain"/>
    <property type="match status" value="1"/>
</dbReference>
<dbReference type="InterPro" id="IPR046947">
    <property type="entry name" value="LytR-like"/>
</dbReference>
<dbReference type="InterPro" id="IPR007492">
    <property type="entry name" value="LytTR_DNA-bd_dom"/>
</dbReference>
<dbReference type="PANTHER" id="PTHR37299:SF2">
    <property type="entry name" value="HTH LYTTR-TYPE DOMAIN-CONTAINING PROTEIN"/>
    <property type="match status" value="1"/>
</dbReference>
<dbReference type="PANTHER" id="PTHR37299">
    <property type="entry name" value="TRANSCRIPTIONAL REGULATOR-RELATED"/>
    <property type="match status" value="1"/>
</dbReference>
<dbReference type="Pfam" id="PF04397">
    <property type="entry name" value="LytTR"/>
    <property type="match status" value="1"/>
</dbReference>
<dbReference type="SMART" id="SM00850">
    <property type="entry name" value="LytTR"/>
    <property type="match status" value="1"/>
</dbReference>
<dbReference type="PROSITE" id="PS50930">
    <property type="entry name" value="HTH_LYTTR"/>
    <property type="match status" value="1"/>
</dbReference>